<accession>Q63SA2</accession>
<evidence type="ECO:0000255" key="1">
    <source>
        <dbReference type="HAMAP-Rule" id="MF_00141"/>
    </source>
</evidence>
<reference key="1">
    <citation type="journal article" date="2004" name="Proc. Natl. Acad. Sci. U.S.A.">
        <title>Genomic plasticity of the causative agent of melioidosis, Burkholderia pseudomallei.</title>
        <authorList>
            <person name="Holden M.T.G."/>
            <person name="Titball R.W."/>
            <person name="Peacock S.J."/>
            <person name="Cerdeno-Tarraga A.-M."/>
            <person name="Atkins T."/>
            <person name="Crossman L.C."/>
            <person name="Pitt T."/>
            <person name="Churcher C."/>
            <person name="Mungall K.L."/>
            <person name="Bentley S.D."/>
            <person name="Sebaihia M."/>
            <person name="Thomson N.R."/>
            <person name="Bason N."/>
            <person name="Beacham I.R."/>
            <person name="Brooks K."/>
            <person name="Brown K.A."/>
            <person name="Brown N.F."/>
            <person name="Challis G.L."/>
            <person name="Cherevach I."/>
            <person name="Chillingworth T."/>
            <person name="Cronin A."/>
            <person name="Crossett B."/>
            <person name="Davis P."/>
            <person name="DeShazer D."/>
            <person name="Feltwell T."/>
            <person name="Fraser A."/>
            <person name="Hance Z."/>
            <person name="Hauser H."/>
            <person name="Holroyd S."/>
            <person name="Jagels K."/>
            <person name="Keith K.E."/>
            <person name="Maddison M."/>
            <person name="Moule S."/>
            <person name="Price C."/>
            <person name="Quail M.A."/>
            <person name="Rabbinowitsch E."/>
            <person name="Rutherford K."/>
            <person name="Sanders M."/>
            <person name="Simmonds M."/>
            <person name="Songsivilai S."/>
            <person name="Stevens K."/>
            <person name="Tumapa S."/>
            <person name="Vesaratchavest M."/>
            <person name="Whitehead S."/>
            <person name="Yeats C."/>
            <person name="Barrell B.G."/>
            <person name="Oyston P.C.F."/>
            <person name="Parkhill J."/>
        </authorList>
    </citation>
    <scope>NUCLEOTIDE SEQUENCE [LARGE SCALE GENOMIC DNA]</scope>
    <source>
        <strain>K96243</strain>
    </source>
</reference>
<feature type="chain" id="PRO_0000094220" description="Elongation factor P">
    <location>
        <begin position="1"/>
        <end position="185"/>
    </location>
</feature>
<keyword id="KW-0963">Cytoplasm</keyword>
<keyword id="KW-0251">Elongation factor</keyword>
<keyword id="KW-0648">Protein biosynthesis</keyword>
<keyword id="KW-1185">Reference proteome</keyword>
<protein>
    <recommendedName>
        <fullName evidence="1">Elongation factor P</fullName>
        <shortName evidence="1">EF-P</shortName>
    </recommendedName>
</protein>
<gene>
    <name evidence="1" type="primary">efp</name>
    <name type="ordered locus">BPSL2422</name>
</gene>
<proteinExistence type="inferred from homology"/>
<organism>
    <name type="scientific">Burkholderia pseudomallei (strain K96243)</name>
    <dbReference type="NCBI Taxonomy" id="272560"/>
    <lineage>
        <taxon>Bacteria</taxon>
        <taxon>Pseudomonadati</taxon>
        <taxon>Pseudomonadota</taxon>
        <taxon>Betaproteobacteria</taxon>
        <taxon>Burkholderiales</taxon>
        <taxon>Burkholderiaceae</taxon>
        <taxon>Burkholderia</taxon>
        <taxon>pseudomallei group</taxon>
    </lineage>
</organism>
<dbReference type="EMBL" id="BX571965">
    <property type="protein sequence ID" value="CAH36425.1"/>
    <property type="molecule type" value="Genomic_DNA"/>
</dbReference>
<dbReference type="RefSeq" id="WP_004193484.1">
    <property type="nucleotide sequence ID" value="NZ_CP009538.1"/>
</dbReference>
<dbReference type="RefSeq" id="YP_109014.1">
    <property type="nucleotide sequence ID" value="NC_006350.1"/>
</dbReference>
<dbReference type="SMR" id="Q63SA2"/>
<dbReference type="STRING" id="272560.BPSL2422"/>
<dbReference type="GeneID" id="93061002"/>
<dbReference type="KEGG" id="bps:BPSL2422"/>
<dbReference type="PATRIC" id="fig|272560.51.peg.2968"/>
<dbReference type="eggNOG" id="COG0231">
    <property type="taxonomic scope" value="Bacteria"/>
</dbReference>
<dbReference type="UniPathway" id="UPA00345"/>
<dbReference type="Proteomes" id="UP000000605">
    <property type="component" value="Chromosome 1"/>
</dbReference>
<dbReference type="GO" id="GO:0005737">
    <property type="term" value="C:cytoplasm"/>
    <property type="evidence" value="ECO:0007669"/>
    <property type="project" value="UniProtKB-SubCell"/>
</dbReference>
<dbReference type="GO" id="GO:0003746">
    <property type="term" value="F:translation elongation factor activity"/>
    <property type="evidence" value="ECO:0007669"/>
    <property type="project" value="UniProtKB-UniRule"/>
</dbReference>
<dbReference type="GO" id="GO:0043043">
    <property type="term" value="P:peptide biosynthetic process"/>
    <property type="evidence" value="ECO:0007669"/>
    <property type="project" value="InterPro"/>
</dbReference>
<dbReference type="CDD" id="cd04470">
    <property type="entry name" value="S1_EF-P_repeat_1"/>
    <property type="match status" value="1"/>
</dbReference>
<dbReference type="CDD" id="cd05794">
    <property type="entry name" value="S1_EF-P_repeat_2"/>
    <property type="match status" value="1"/>
</dbReference>
<dbReference type="FunFam" id="2.30.30.30:FF:000003">
    <property type="entry name" value="Elongation factor P"/>
    <property type="match status" value="1"/>
</dbReference>
<dbReference type="FunFam" id="2.40.50.140:FF:000004">
    <property type="entry name" value="Elongation factor P"/>
    <property type="match status" value="1"/>
</dbReference>
<dbReference type="FunFam" id="2.40.50.140:FF:000009">
    <property type="entry name" value="Elongation factor P"/>
    <property type="match status" value="1"/>
</dbReference>
<dbReference type="Gene3D" id="2.30.30.30">
    <property type="match status" value="1"/>
</dbReference>
<dbReference type="Gene3D" id="2.40.50.140">
    <property type="entry name" value="Nucleic acid-binding proteins"/>
    <property type="match status" value="2"/>
</dbReference>
<dbReference type="HAMAP" id="MF_00141">
    <property type="entry name" value="EF_P"/>
    <property type="match status" value="1"/>
</dbReference>
<dbReference type="InterPro" id="IPR015365">
    <property type="entry name" value="Elong-fact-P_C"/>
</dbReference>
<dbReference type="InterPro" id="IPR012340">
    <property type="entry name" value="NA-bd_OB-fold"/>
</dbReference>
<dbReference type="InterPro" id="IPR014722">
    <property type="entry name" value="Rib_uL2_dom2"/>
</dbReference>
<dbReference type="InterPro" id="IPR020599">
    <property type="entry name" value="Transl_elong_fac_P/YeiP"/>
</dbReference>
<dbReference type="InterPro" id="IPR013185">
    <property type="entry name" value="Transl_elong_KOW-like"/>
</dbReference>
<dbReference type="InterPro" id="IPR001059">
    <property type="entry name" value="Transl_elong_P/YeiP_cen"/>
</dbReference>
<dbReference type="InterPro" id="IPR013852">
    <property type="entry name" value="Transl_elong_P/YeiP_CS"/>
</dbReference>
<dbReference type="InterPro" id="IPR011768">
    <property type="entry name" value="Transl_elongation_fac_P"/>
</dbReference>
<dbReference type="InterPro" id="IPR008991">
    <property type="entry name" value="Translation_prot_SH3-like_sf"/>
</dbReference>
<dbReference type="NCBIfam" id="TIGR00038">
    <property type="entry name" value="efp"/>
    <property type="match status" value="1"/>
</dbReference>
<dbReference type="NCBIfam" id="NF001810">
    <property type="entry name" value="PRK00529.1"/>
    <property type="match status" value="1"/>
</dbReference>
<dbReference type="PANTHER" id="PTHR30053">
    <property type="entry name" value="ELONGATION FACTOR P"/>
    <property type="match status" value="1"/>
</dbReference>
<dbReference type="PANTHER" id="PTHR30053:SF12">
    <property type="entry name" value="ELONGATION FACTOR P (EF-P) FAMILY PROTEIN"/>
    <property type="match status" value="1"/>
</dbReference>
<dbReference type="Pfam" id="PF01132">
    <property type="entry name" value="EFP"/>
    <property type="match status" value="1"/>
</dbReference>
<dbReference type="Pfam" id="PF08207">
    <property type="entry name" value="EFP_N"/>
    <property type="match status" value="1"/>
</dbReference>
<dbReference type="Pfam" id="PF09285">
    <property type="entry name" value="Elong-fact-P_C"/>
    <property type="match status" value="1"/>
</dbReference>
<dbReference type="PIRSF" id="PIRSF005901">
    <property type="entry name" value="EF-P"/>
    <property type="match status" value="1"/>
</dbReference>
<dbReference type="SMART" id="SM01185">
    <property type="entry name" value="EFP"/>
    <property type="match status" value="1"/>
</dbReference>
<dbReference type="SMART" id="SM00841">
    <property type="entry name" value="Elong-fact-P_C"/>
    <property type="match status" value="1"/>
</dbReference>
<dbReference type="SUPFAM" id="SSF50249">
    <property type="entry name" value="Nucleic acid-binding proteins"/>
    <property type="match status" value="2"/>
</dbReference>
<dbReference type="SUPFAM" id="SSF50104">
    <property type="entry name" value="Translation proteins SH3-like domain"/>
    <property type="match status" value="1"/>
</dbReference>
<dbReference type="PROSITE" id="PS01275">
    <property type="entry name" value="EFP"/>
    <property type="match status" value="1"/>
</dbReference>
<comment type="function">
    <text evidence="1">Involved in peptide bond synthesis. Stimulates efficient translation and peptide-bond synthesis on native or reconstituted 70S ribosomes in vitro. Probably functions indirectly by altering the affinity of the ribosome for aminoacyl-tRNA, thus increasing their reactivity as acceptors for peptidyl transferase.</text>
</comment>
<comment type="pathway">
    <text evidence="1">Protein biosynthesis; polypeptide chain elongation.</text>
</comment>
<comment type="subcellular location">
    <subcellularLocation>
        <location evidence="1">Cytoplasm</location>
    </subcellularLocation>
</comment>
<comment type="similarity">
    <text evidence="1">Belongs to the elongation factor P family.</text>
</comment>
<sequence>MKTAQELRVGNVVMIGNDAWVVSKTEYNKSGRNAAVVKMKLKNLLNGGGQESVYKADDKFEVVVLDRKEVTYSYFADPMYVFMDADYNQYEVEAEMMGDALNYLEDGMACEVVFYNEKAISVELPTILVREITYTEPAVKGDTSSGKVLKNAKLATGFELQVPLFCNTGDKIEIDTRTNEYRSRA</sequence>
<name>EFP_BURPS</name>